<name>SCPA_EXIS2</name>
<sequence length="251" mass="29069">MESYSVKMDAFEGPLDLLLHLIGKLEIDLYDISVSIVTDQYVSYIRAMQHLELDVASEYLVMAATLLQLKSKQLLPVEQTDFEDVPDFEEDPTREGLIQQLIEYKAYKEAALVLKEKEEARLELFSKQPEDLMTYLDPDNQDFSGNLSFSDLLRAYEKMRQRVAWKVRRSKTVKREERTLEQQMIHVSEYVFANEGTTFFGFFTEQPTVEELVVSFLAVLELVKQCVVACEQMSDDILLRALVKEENQIGV</sequence>
<dbReference type="EMBL" id="CP001022">
    <property type="protein sequence ID" value="ACB60490.1"/>
    <property type="molecule type" value="Genomic_DNA"/>
</dbReference>
<dbReference type="RefSeq" id="WP_012369913.1">
    <property type="nucleotide sequence ID" value="NC_010556.1"/>
</dbReference>
<dbReference type="SMR" id="B1YMA3"/>
<dbReference type="STRING" id="262543.Exig_1010"/>
<dbReference type="KEGG" id="esi:Exig_1010"/>
<dbReference type="eggNOG" id="COG1354">
    <property type="taxonomic scope" value="Bacteria"/>
</dbReference>
<dbReference type="HOGENOM" id="CLU_038686_3_1_9"/>
<dbReference type="OrthoDB" id="9811016at2"/>
<dbReference type="Proteomes" id="UP000001681">
    <property type="component" value="Chromosome"/>
</dbReference>
<dbReference type="GO" id="GO:0005737">
    <property type="term" value="C:cytoplasm"/>
    <property type="evidence" value="ECO:0007669"/>
    <property type="project" value="UniProtKB-SubCell"/>
</dbReference>
<dbReference type="GO" id="GO:0051301">
    <property type="term" value="P:cell division"/>
    <property type="evidence" value="ECO:0007669"/>
    <property type="project" value="UniProtKB-KW"/>
</dbReference>
<dbReference type="GO" id="GO:0007059">
    <property type="term" value="P:chromosome segregation"/>
    <property type="evidence" value="ECO:0007669"/>
    <property type="project" value="UniProtKB-UniRule"/>
</dbReference>
<dbReference type="GO" id="GO:0006260">
    <property type="term" value="P:DNA replication"/>
    <property type="evidence" value="ECO:0007669"/>
    <property type="project" value="UniProtKB-UniRule"/>
</dbReference>
<dbReference type="Gene3D" id="6.10.250.2410">
    <property type="match status" value="1"/>
</dbReference>
<dbReference type="HAMAP" id="MF_01805">
    <property type="entry name" value="ScpA"/>
    <property type="match status" value="1"/>
</dbReference>
<dbReference type="InterPro" id="IPR003768">
    <property type="entry name" value="ScpA"/>
</dbReference>
<dbReference type="PANTHER" id="PTHR33969">
    <property type="entry name" value="SEGREGATION AND CONDENSATION PROTEIN A"/>
    <property type="match status" value="1"/>
</dbReference>
<dbReference type="PANTHER" id="PTHR33969:SF2">
    <property type="entry name" value="SEGREGATION AND CONDENSATION PROTEIN A"/>
    <property type="match status" value="1"/>
</dbReference>
<dbReference type="Pfam" id="PF02616">
    <property type="entry name" value="SMC_ScpA"/>
    <property type="match status" value="1"/>
</dbReference>
<feature type="chain" id="PRO_1000187562" description="Segregation and condensation protein A">
    <location>
        <begin position="1"/>
        <end position="251"/>
    </location>
</feature>
<keyword id="KW-0131">Cell cycle</keyword>
<keyword id="KW-0132">Cell division</keyword>
<keyword id="KW-0159">Chromosome partition</keyword>
<keyword id="KW-0963">Cytoplasm</keyword>
<keyword id="KW-1185">Reference proteome</keyword>
<evidence type="ECO:0000255" key="1">
    <source>
        <dbReference type="HAMAP-Rule" id="MF_01805"/>
    </source>
</evidence>
<protein>
    <recommendedName>
        <fullName evidence="1">Segregation and condensation protein A</fullName>
    </recommendedName>
</protein>
<reference key="1">
    <citation type="submission" date="2008-04" db="EMBL/GenBank/DDBJ databases">
        <title>Complete sequence of chromosome of Exiguobacterium sibiricum 255-15.</title>
        <authorList>
            <consortium name="US DOE Joint Genome Institute"/>
            <person name="Copeland A."/>
            <person name="Lucas S."/>
            <person name="Lapidus A."/>
            <person name="Glavina del Rio T."/>
            <person name="Dalin E."/>
            <person name="Tice H."/>
            <person name="Bruce D."/>
            <person name="Goodwin L."/>
            <person name="Pitluck S."/>
            <person name="Kiss H."/>
            <person name="Chertkov O."/>
            <person name="Monk C."/>
            <person name="Brettin T."/>
            <person name="Detter J.C."/>
            <person name="Han C."/>
            <person name="Kuske C.R."/>
            <person name="Schmutz J."/>
            <person name="Larimer F."/>
            <person name="Land M."/>
            <person name="Hauser L."/>
            <person name="Kyrpides N."/>
            <person name="Mikhailova N."/>
            <person name="Vishnivetskaya T."/>
            <person name="Rodrigues D.F."/>
            <person name="Gilichinsky D."/>
            <person name="Tiedje J."/>
            <person name="Richardson P."/>
        </authorList>
    </citation>
    <scope>NUCLEOTIDE SEQUENCE [LARGE SCALE GENOMIC DNA]</scope>
    <source>
        <strain>DSM 17290 / CCUG 55495 / CIP 109462 / JCM 13490 / 255-15</strain>
    </source>
</reference>
<comment type="function">
    <text evidence="1">Participates in chromosomal partition during cell division. May act via the formation of a condensin-like complex containing Smc and ScpB that pull DNA away from mid-cell into both cell halves.</text>
</comment>
<comment type="subunit">
    <text evidence="1">Component of a cohesin-like complex composed of ScpA, ScpB and the Smc homodimer, in which ScpA and ScpB bind to the head domain of Smc. The presence of the three proteins is required for the association of the complex with DNA.</text>
</comment>
<comment type="subcellular location">
    <subcellularLocation>
        <location evidence="1">Cytoplasm</location>
    </subcellularLocation>
    <text evidence="1">Associated with two foci at the outer edges of the nucleoid region in young cells, and at four foci within both cell halves in older cells.</text>
</comment>
<comment type="similarity">
    <text evidence="1">Belongs to the ScpA family.</text>
</comment>
<proteinExistence type="inferred from homology"/>
<gene>
    <name evidence="1" type="primary">scpA</name>
    <name type="ordered locus">Exig_1010</name>
</gene>
<organism>
    <name type="scientific">Exiguobacterium sibiricum (strain DSM 17290 / CCUG 55495 / CIP 109462 / JCM 13490 / 255-15)</name>
    <dbReference type="NCBI Taxonomy" id="262543"/>
    <lineage>
        <taxon>Bacteria</taxon>
        <taxon>Bacillati</taxon>
        <taxon>Bacillota</taxon>
        <taxon>Bacilli</taxon>
        <taxon>Bacillales</taxon>
        <taxon>Bacillales Family XII. Incertae Sedis</taxon>
        <taxon>Exiguobacterium</taxon>
    </lineage>
</organism>
<accession>B1YMA3</accession>